<organism>
    <name type="scientific">Corynebacterium glutamicum (strain R)</name>
    <dbReference type="NCBI Taxonomy" id="340322"/>
    <lineage>
        <taxon>Bacteria</taxon>
        <taxon>Bacillati</taxon>
        <taxon>Actinomycetota</taxon>
        <taxon>Actinomycetes</taxon>
        <taxon>Mycobacteriales</taxon>
        <taxon>Corynebacteriaceae</taxon>
        <taxon>Corynebacterium</taxon>
    </lineage>
</organism>
<dbReference type="EC" id="6.1.1.15" evidence="1"/>
<dbReference type="EMBL" id="AP009044">
    <property type="protein sequence ID" value="BAF54817.1"/>
    <property type="molecule type" value="Genomic_DNA"/>
</dbReference>
<dbReference type="RefSeq" id="WP_011897404.1">
    <property type="nucleotide sequence ID" value="NC_009342.1"/>
</dbReference>
<dbReference type="SMR" id="A4QF01"/>
<dbReference type="KEGG" id="cgt:cgR_1823"/>
<dbReference type="HOGENOM" id="CLU_016739_0_0_11"/>
<dbReference type="PhylomeDB" id="A4QF01"/>
<dbReference type="Proteomes" id="UP000006698">
    <property type="component" value="Chromosome"/>
</dbReference>
<dbReference type="GO" id="GO:0005829">
    <property type="term" value="C:cytosol"/>
    <property type="evidence" value="ECO:0007669"/>
    <property type="project" value="TreeGrafter"/>
</dbReference>
<dbReference type="GO" id="GO:0002161">
    <property type="term" value="F:aminoacyl-tRNA deacylase activity"/>
    <property type="evidence" value="ECO:0007669"/>
    <property type="project" value="InterPro"/>
</dbReference>
<dbReference type="GO" id="GO:0005524">
    <property type="term" value="F:ATP binding"/>
    <property type="evidence" value="ECO:0007669"/>
    <property type="project" value="UniProtKB-UniRule"/>
</dbReference>
<dbReference type="GO" id="GO:0004827">
    <property type="term" value="F:proline-tRNA ligase activity"/>
    <property type="evidence" value="ECO:0007669"/>
    <property type="project" value="UniProtKB-UniRule"/>
</dbReference>
<dbReference type="GO" id="GO:0006433">
    <property type="term" value="P:prolyl-tRNA aminoacylation"/>
    <property type="evidence" value="ECO:0007669"/>
    <property type="project" value="UniProtKB-UniRule"/>
</dbReference>
<dbReference type="CDD" id="cd00861">
    <property type="entry name" value="ProRS_anticodon_short"/>
    <property type="match status" value="1"/>
</dbReference>
<dbReference type="CDD" id="cd00779">
    <property type="entry name" value="ProRS_core_prok"/>
    <property type="match status" value="1"/>
</dbReference>
<dbReference type="FunFam" id="3.30.930.10:FF:000065">
    <property type="entry name" value="Proline--tRNA ligase"/>
    <property type="match status" value="1"/>
</dbReference>
<dbReference type="FunFam" id="3.30.930.10:FF:000070">
    <property type="entry name" value="Proline--tRNA ligase"/>
    <property type="match status" value="1"/>
</dbReference>
<dbReference type="Gene3D" id="3.40.50.800">
    <property type="entry name" value="Anticodon-binding domain"/>
    <property type="match status" value="1"/>
</dbReference>
<dbReference type="Gene3D" id="3.30.930.10">
    <property type="entry name" value="Bira Bifunctional Protein, Domain 2"/>
    <property type="match status" value="2"/>
</dbReference>
<dbReference type="Gene3D" id="3.90.960.10">
    <property type="entry name" value="YbaK/aminoacyl-tRNA synthetase-associated domain"/>
    <property type="match status" value="1"/>
</dbReference>
<dbReference type="HAMAP" id="MF_01569">
    <property type="entry name" value="Pro_tRNA_synth_type1"/>
    <property type="match status" value="1"/>
</dbReference>
<dbReference type="InterPro" id="IPR002314">
    <property type="entry name" value="aa-tRNA-synt_IIb"/>
</dbReference>
<dbReference type="InterPro" id="IPR006195">
    <property type="entry name" value="aa-tRNA-synth_II"/>
</dbReference>
<dbReference type="InterPro" id="IPR045864">
    <property type="entry name" value="aa-tRNA-synth_II/BPL/LPL"/>
</dbReference>
<dbReference type="InterPro" id="IPR004154">
    <property type="entry name" value="Anticodon-bd"/>
</dbReference>
<dbReference type="InterPro" id="IPR036621">
    <property type="entry name" value="Anticodon-bd_dom_sf"/>
</dbReference>
<dbReference type="InterPro" id="IPR002316">
    <property type="entry name" value="Pro-tRNA-ligase_IIa"/>
</dbReference>
<dbReference type="InterPro" id="IPR004500">
    <property type="entry name" value="Pro-tRNA-synth_IIa_bac-type"/>
</dbReference>
<dbReference type="InterPro" id="IPR023717">
    <property type="entry name" value="Pro-tRNA-Synthase_IIa_type1"/>
</dbReference>
<dbReference type="InterPro" id="IPR050062">
    <property type="entry name" value="Pro-tRNA_synthetase"/>
</dbReference>
<dbReference type="InterPro" id="IPR044140">
    <property type="entry name" value="ProRS_anticodon_short"/>
</dbReference>
<dbReference type="InterPro" id="IPR033730">
    <property type="entry name" value="ProRS_core_prok"/>
</dbReference>
<dbReference type="InterPro" id="IPR036754">
    <property type="entry name" value="YbaK/aa-tRNA-synt-asso_dom_sf"/>
</dbReference>
<dbReference type="InterPro" id="IPR007214">
    <property type="entry name" value="YbaK/aa-tRNA-synth-assoc-dom"/>
</dbReference>
<dbReference type="NCBIfam" id="NF006625">
    <property type="entry name" value="PRK09194.1"/>
    <property type="match status" value="1"/>
</dbReference>
<dbReference type="NCBIfam" id="TIGR00409">
    <property type="entry name" value="proS_fam_II"/>
    <property type="match status" value="1"/>
</dbReference>
<dbReference type="PANTHER" id="PTHR42753">
    <property type="entry name" value="MITOCHONDRIAL RIBOSOME PROTEIN L39/PROLYL-TRNA LIGASE FAMILY MEMBER"/>
    <property type="match status" value="1"/>
</dbReference>
<dbReference type="PANTHER" id="PTHR42753:SF2">
    <property type="entry name" value="PROLINE--TRNA LIGASE"/>
    <property type="match status" value="1"/>
</dbReference>
<dbReference type="Pfam" id="PF03129">
    <property type="entry name" value="HGTP_anticodon"/>
    <property type="match status" value="1"/>
</dbReference>
<dbReference type="Pfam" id="PF00587">
    <property type="entry name" value="tRNA-synt_2b"/>
    <property type="match status" value="1"/>
</dbReference>
<dbReference type="Pfam" id="PF04073">
    <property type="entry name" value="tRNA_edit"/>
    <property type="match status" value="1"/>
</dbReference>
<dbReference type="PRINTS" id="PR01046">
    <property type="entry name" value="TRNASYNTHPRO"/>
</dbReference>
<dbReference type="SUPFAM" id="SSF52954">
    <property type="entry name" value="Class II aaRS ABD-related"/>
    <property type="match status" value="1"/>
</dbReference>
<dbReference type="SUPFAM" id="SSF55681">
    <property type="entry name" value="Class II aaRS and biotin synthetases"/>
    <property type="match status" value="1"/>
</dbReference>
<dbReference type="SUPFAM" id="SSF55826">
    <property type="entry name" value="YbaK/ProRS associated domain"/>
    <property type="match status" value="1"/>
</dbReference>
<dbReference type="PROSITE" id="PS50862">
    <property type="entry name" value="AA_TRNA_LIGASE_II"/>
    <property type="match status" value="1"/>
</dbReference>
<comment type="function">
    <text evidence="1">Catalyzes the attachment of proline to tRNA(Pro) in a two-step reaction: proline is first activated by ATP to form Pro-AMP and then transferred to the acceptor end of tRNA(Pro). As ProRS can inadvertently accommodate and process non-cognate amino acids such as alanine and cysteine, to avoid such errors it has two additional distinct editing activities against alanine. One activity is designated as 'pretransfer' editing and involves the tRNA(Pro)-independent hydrolysis of activated Ala-AMP. The other activity is designated 'posttransfer' editing and involves deacylation of mischarged Ala-tRNA(Pro). The misacylated Cys-tRNA(Pro) is not edited by ProRS.</text>
</comment>
<comment type="catalytic activity">
    <reaction evidence="1">
        <text>tRNA(Pro) + L-proline + ATP = L-prolyl-tRNA(Pro) + AMP + diphosphate</text>
        <dbReference type="Rhea" id="RHEA:14305"/>
        <dbReference type="Rhea" id="RHEA-COMP:9700"/>
        <dbReference type="Rhea" id="RHEA-COMP:9702"/>
        <dbReference type="ChEBI" id="CHEBI:30616"/>
        <dbReference type="ChEBI" id="CHEBI:33019"/>
        <dbReference type="ChEBI" id="CHEBI:60039"/>
        <dbReference type="ChEBI" id="CHEBI:78442"/>
        <dbReference type="ChEBI" id="CHEBI:78532"/>
        <dbReference type="ChEBI" id="CHEBI:456215"/>
        <dbReference type="EC" id="6.1.1.15"/>
    </reaction>
</comment>
<comment type="subunit">
    <text evidence="1">Homodimer.</text>
</comment>
<comment type="subcellular location">
    <subcellularLocation>
        <location evidence="1">Cytoplasm</location>
    </subcellularLocation>
</comment>
<comment type="domain">
    <text evidence="1">Consists of three domains: the N-terminal catalytic domain, the editing domain and the C-terminal anticodon-binding domain.</text>
</comment>
<comment type="similarity">
    <text evidence="1">Belongs to the class-II aminoacyl-tRNA synthetase family. ProS type 1 subfamily.</text>
</comment>
<protein>
    <recommendedName>
        <fullName evidence="1">Proline--tRNA ligase</fullName>
        <ecNumber evidence="1">6.1.1.15</ecNumber>
    </recommendedName>
    <alternativeName>
        <fullName evidence="1">Prolyl-tRNA synthetase</fullName>
        <shortName evidence="1">ProRS</shortName>
    </alternativeName>
</protein>
<proteinExistence type="inferred from homology"/>
<feature type="chain" id="PRO_1000069134" description="Proline--tRNA ligase">
    <location>
        <begin position="1"/>
        <end position="588"/>
    </location>
</feature>
<reference key="1">
    <citation type="journal article" date="2007" name="Microbiology">
        <title>Comparative analysis of the Corynebacterium glutamicum group and complete genome sequence of strain R.</title>
        <authorList>
            <person name="Yukawa H."/>
            <person name="Omumasaba C.A."/>
            <person name="Nonaka H."/>
            <person name="Kos P."/>
            <person name="Okai N."/>
            <person name="Suzuki N."/>
            <person name="Suda M."/>
            <person name="Tsuge Y."/>
            <person name="Watanabe J."/>
            <person name="Ikeda Y."/>
            <person name="Vertes A.A."/>
            <person name="Inui M."/>
        </authorList>
    </citation>
    <scope>NUCLEOTIDE SEQUENCE [LARGE SCALE GENOMIC DNA]</scope>
    <source>
        <strain>R</strain>
    </source>
</reference>
<gene>
    <name evidence="1" type="primary">proS</name>
    <name type="ordered locus">cgR_1823</name>
</gene>
<name>SYP_CORGB</name>
<evidence type="ECO:0000255" key="1">
    <source>
        <dbReference type="HAMAP-Rule" id="MF_01569"/>
    </source>
</evidence>
<accession>A4QF01</accession>
<keyword id="KW-0030">Aminoacyl-tRNA synthetase</keyword>
<keyword id="KW-0067">ATP-binding</keyword>
<keyword id="KW-0963">Cytoplasm</keyword>
<keyword id="KW-0436">Ligase</keyword>
<keyword id="KW-0547">Nucleotide-binding</keyword>
<keyword id="KW-0648">Protein biosynthesis</keyword>
<sequence length="588" mass="64350">MITRLSTLFLRTLREDPADAEVPSHKLLVRAGYIRRVAPGIYSWLPLGLRAVRNIEAVVREEMDAIGGQELLFPALLPREPYETTQRWTEYGDSLFRLKDRKGADYLLGPTHEEMFAATVKDLYNSYKDFPVTLYQIQTKYRDEERPRAGVLRGREFVMKDSYSFDMSDAGLDESYAKHRAAYQRIFDRLGLEYAICQATSGAMGGSASEEFLAVSENGEDTFVRSTSGNYAANVEAVVTQPGVERDIEGLPEAVTYETPVSETIDALVDWANSIDVQIEGREVTAADTLKCIVVKVREPGAEEAELTGILLPGDREVDMKRLEASLEPAEVELAVESDFADNPFLVKGYVGPVGLAKNGVKVLADPRVVTGTSWITGADEKERHVVGLVAGRDFTPDGFIEAAEIKEGDPAPAGEGTLTLARGIEIGHIFQLGRKYTEAFDVQILDENGKRAIPTMGSYGLGVTRLLAVLAEQRHDDAGLNWSVEVAPYQVHVVAANKDAAAIEAAERFAAELSAAGLDVLFDDRPKVSPGVKFKDAELLGMPFALILGRGYAEGKVELRVRGGEKSELDADQAVAQIVEMVAQARN</sequence>